<feature type="chain" id="PRO_0000177242" description="Large ribosomal subunit protein bL20">
    <location>
        <begin position="1"/>
        <end position="119"/>
    </location>
</feature>
<gene>
    <name evidence="1" type="primary">rplT</name>
    <name type="ordered locus">M6_Spy0638</name>
</gene>
<organism>
    <name type="scientific">Streptococcus pyogenes serotype M6 (strain ATCC BAA-946 / MGAS10394)</name>
    <dbReference type="NCBI Taxonomy" id="286636"/>
    <lineage>
        <taxon>Bacteria</taxon>
        <taxon>Bacillati</taxon>
        <taxon>Bacillota</taxon>
        <taxon>Bacilli</taxon>
        <taxon>Lactobacillales</taxon>
        <taxon>Streptococcaceae</taxon>
        <taxon>Streptococcus</taxon>
    </lineage>
</organism>
<keyword id="KW-0687">Ribonucleoprotein</keyword>
<keyword id="KW-0689">Ribosomal protein</keyword>
<keyword id="KW-0694">RNA-binding</keyword>
<keyword id="KW-0699">rRNA-binding</keyword>
<sequence length="119" mass="13622">MARVKGGVVSRKRRKRILKLAKGYYGAKHILFRTAKEQVMNSYYYAYRDRRQKKRDFRKLWITRINAAARMNGLSYSQLMHGLKLAEIEVNRKMLADLAVADAAAFTALADAAKAKLGK</sequence>
<evidence type="ECO:0000255" key="1">
    <source>
        <dbReference type="HAMAP-Rule" id="MF_00382"/>
    </source>
</evidence>
<evidence type="ECO:0000305" key="2"/>
<name>RL20_STRP6</name>
<protein>
    <recommendedName>
        <fullName evidence="1">Large ribosomal subunit protein bL20</fullName>
    </recommendedName>
    <alternativeName>
        <fullName evidence="2">50S ribosomal protein L20</fullName>
    </alternativeName>
</protein>
<accession>Q5XCU0</accession>
<reference key="1">
    <citation type="journal article" date="2004" name="J. Infect. Dis.">
        <title>Progress toward characterization of the group A Streptococcus metagenome: complete genome sequence of a macrolide-resistant serotype M6 strain.</title>
        <authorList>
            <person name="Banks D.J."/>
            <person name="Porcella S.F."/>
            <person name="Barbian K.D."/>
            <person name="Beres S.B."/>
            <person name="Philips L.E."/>
            <person name="Voyich J.M."/>
            <person name="DeLeo F.R."/>
            <person name="Martin J.M."/>
            <person name="Somerville G.A."/>
            <person name="Musser J.M."/>
        </authorList>
    </citation>
    <scope>NUCLEOTIDE SEQUENCE [LARGE SCALE GENOMIC DNA]</scope>
    <source>
        <strain>ATCC BAA-946 / MGAS10394</strain>
    </source>
</reference>
<comment type="function">
    <text evidence="1">Binds directly to 23S ribosomal RNA and is necessary for the in vitro assembly process of the 50S ribosomal subunit. It is not involved in the protein synthesizing functions of that subunit.</text>
</comment>
<comment type="similarity">
    <text evidence="1">Belongs to the bacterial ribosomal protein bL20 family.</text>
</comment>
<dbReference type="EMBL" id="CP000003">
    <property type="protein sequence ID" value="AAT86773.1"/>
    <property type="molecule type" value="Genomic_DNA"/>
</dbReference>
<dbReference type="RefSeq" id="WP_002985149.1">
    <property type="nucleotide sequence ID" value="NC_006086.1"/>
</dbReference>
<dbReference type="SMR" id="Q5XCU0"/>
<dbReference type="GeneID" id="69901075"/>
<dbReference type="KEGG" id="spa:M6_Spy0638"/>
<dbReference type="HOGENOM" id="CLU_123265_0_1_9"/>
<dbReference type="Proteomes" id="UP000001167">
    <property type="component" value="Chromosome"/>
</dbReference>
<dbReference type="GO" id="GO:1990904">
    <property type="term" value="C:ribonucleoprotein complex"/>
    <property type="evidence" value="ECO:0007669"/>
    <property type="project" value="UniProtKB-KW"/>
</dbReference>
<dbReference type="GO" id="GO:0005840">
    <property type="term" value="C:ribosome"/>
    <property type="evidence" value="ECO:0007669"/>
    <property type="project" value="UniProtKB-KW"/>
</dbReference>
<dbReference type="GO" id="GO:0019843">
    <property type="term" value="F:rRNA binding"/>
    <property type="evidence" value="ECO:0007669"/>
    <property type="project" value="UniProtKB-UniRule"/>
</dbReference>
<dbReference type="GO" id="GO:0003735">
    <property type="term" value="F:structural constituent of ribosome"/>
    <property type="evidence" value="ECO:0007669"/>
    <property type="project" value="InterPro"/>
</dbReference>
<dbReference type="GO" id="GO:0000027">
    <property type="term" value="P:ribosomal large subunit assembly"/>
    <property type="evidence" value="ECO:0007669"/>
    <property type="project" value="UniProtKB-UniRule"/>
</dbReference>
<dbReference type="GO" id="GO:0006412">
    <property type="term" value="P:translation"/>
    <property type="evidence" value="ECO:0007669"/>
    <property type="project" value="InterPro"/>
</dbReference>
<dbReference type="CDD" id="cd07026">
    <property type="entry name" value="Ribosomal_L20"/>
    <property type="match status" value="1"/>
</dbReference>
<dbReference type="FunFam" id="1.10.1900.20:FF:000001">
    <property type="entry name" value="50S ribosomal protein L20"/>
    <property type="match status" value="1"/>
</dbReference>
<dbReference type="Gene3D" id="6.10.160.10">
    <property type="match status" value="1"/>
</dbReference>
<dbReference type="Gene3D" id="1.10.1900.20">
    <property type="entry name" value="Ribosomal protein L20"/>
    <property type="match status" value="1"/>
</dbReference>
<dbReference type="HAMAP" id="MF_00382">
    <property type="entry name" value="Ribosomal_bL20"/>
    <property type="match status" value="1"/>
</dbReference>
<dbReference type="InterPro" id="IPR005813">
    <property type="entry name" value="Ribosomal_bL20"/>
</dbReference>
<dbReference type="InterPro" id="IPR049946">
    <property type="entry name" value="RIBOSOMAL_L20_CS"/>
</dbReference>
<dbReference type="InterPro" id="IPR035566">
    <property type="entry name" value="Ribosomal_protein_bL20_C"/>
</dbReference>
<dbReference type="NCBIfam" id="TIGR01032">
    <property type="entry name" value="rplT_bact"/>
    <property type="match status" value="1"/>
</dbReference>
<dbReference type="PANTHER" id="PTHR10986">
    <property type="entry name" value="39S RIBOSOMAL PROTEIN L20"/>
    <property type="match status" value="1"/>
</dbReference>
<dbReference type="Pfam" id="PF00453">
    <property type="entry name" value="Ribosomal_L20"/>
    <property type="match status" value="1"/>
</dbReference>
<dbReference type="PRINTS" id="PR00062">
    <property type="entry name" value="RIBOSOMALL20"/>
</dbReference>
<dbReference type="SUPFAM" id="SSF74731">
    <property type="entry name" value="Ribosomal protein L20"/>
    <property type="match status" value="1"/>
</dbReference>
<dbReference type="PROSITE" id="PS00937">
    <property type="entry name" value="RIBOSOMAL_L20"/>
    <property type="match status" value="1"/>
</dbReference>
<proteinExistence type="inferred from homology"/>